<feature type="chain" id="PRO_0000185837" description="Glutathione S-transferase Mu 1">
    <location>
        <begin position="1"/>
        <end position="218"/>
    </location>
</feature>
<feature type="domain" description="GST N-terminal">
    <location>
        <begin position="2"/>
        <end position="88"/>
    </location>
</feature>
<feature type="domain" description="GST C-terminal">
    <location>
        <begin position="90"/>
        <end position="208"/>
    </location>
</feature>
<feature type="binding site" evidence="2">
    <location>
        <begin position="7"/>
        <end position="8"/>
    </location>
    <ligand>
        <name>glutathione</name>
        <dbReference type="ChEBI" id="CHEBI:57925"/>
    </ligand>
</feature>
<feature type="binding site" evidence="2">
    <location>
        <begin position="46"/>
        <end position="50"/>
    </location>
    <ligand>
        <name>glutathione</name>
        <dbReference type="ChEBI" id="CHEBI:57925"/>
    </ligand>
</feature>
<feature type="binding site" evidence="2">
    <location>
        <begin position="59"/>
        <end position="60"/>
    </location>
    <ligand>
        <name>glutathione</name>
        <dbReference type="ChEBI" id="CHEBI:57925"/>
    </ligand>
</feature>
<feature type="binding site" evidence="2">
    <location>
        <begin position="72"/>
        <end position="73"/>
    </location>
    <ligand>
        <name>glutathione</name>
        <dbReference type="ChEBI" id="CHEBI:57925"/>
    </ligand>
</feature>
<feature type="binding site" evidence="1">
    <location>
        <position position="116"/>
    </location>
    <ligand>
        <name>substrate</name>
    </ligand>
</feature>
<proteinExistence type="evidence at protein level"/>
<evidence type="ECO:0000250" key="1"/>
<evidence type="ECO:0000250" key="2">
    <source>
        <dbReference type="UniProtKB" id="P08515"/>
    </source>
</evidence>
<evidence type="ECO:0000305" key="3"/>
<protein>
    <recommendedName>
        <fullName>Glutathione S-transferase Mu 1</fullName>
        <ecNumber>2.5.1.18</ecNumber>
    </recommendedName>
    <alternativeName>
        <fullName>GST Mu I</fullName>
    </alternativeName>
    <alternativeName>
        <fullName>GST class-mu</fullName>
    </alternativeName>
</protein>
<comment type="function">
    <text>Conjugation of reduced glutathione to a wide number of exogenous and endogenous hydrophobic electrophiles.</text>
</comment>
<comment type="catalytic activity">
    <reaction>
        <text>RX + glutathione = an S-substituted glutathione + a halide anion + H(+)</text>
        <dbReference type="Rhea" id="RHEA:16437"/>
        <dbReference type="ChEBI" id="CHEBI:15378"/>
        <dbReference type="ChEBI" id="CHEBI:16042"/>
        <dbReference type="ChEBI" id="CHEBI:17792"/>
        <dbReference type="ChEBI" id="CHEBI:57925"/>
        <dbReference type="ChEBI" id="CHEBI:90779"/>
        <dbReference type="EC" id="2.5.1.18"/>
    </reaction>
</comment>
<comment type="subunit">
    <text>Homodimer.</text>
</comment>
<comment type="subcellular location">
    <subcellularLocation>
        <location>Cytoplasm</location>
    </subcellularLocation>
</comment>
<comment type="tissue specificity">
    <text>Well expressed in rabbit liver, brain and kidney.</text>
</comment>
<comment type="similarity">
    <text evidence="3">Belongs to the GST superfamily. Mu family.</text>
</comment>
<dbReference type="EC" id="2.5.1.18"/>
<dbReference type="EMBL" id="L23766">
    <property type="protein sequence ID" value="AAA69665.1"/>
    <property type="molecule type" value="mRNA"/>
</dbReference>
<dbReference type="PIR" id="S65674">
    <property type="entry name" value="S65674"/>
</dbReference>
<dbReference type="RefSeq" id="NP_001075721.1">
    <property type="nucleotide sequence ID" value="NM_001082252.1"/>
</dbReference>
<dbReference type="SMR" id="P46409"/>
<dbReference type="FunCoup" id="P46409">
    <property type="interactions" value="32"/>
</dbReference>
<dbReference type="STRING" id="9986.ENSOCUP00000043868"/>
<dbReference type="PaxDb" id="9986-ENSOCUP00000021965"/>
<dbReference type="GeneID" id="100009073"/>
<dbReference type="KEGG" id="ocu:100009073"/>
<dbReference type="CTD" id="2946"/>
<dbReference type="eggNOG" id="KOG1695">
    <property type="taxonomic scope" value="Eukaryota"/>
</dbReference>
<dbReference type="InParanoid" id="P46409"/>
<dbReference type="OrthoDB" id="4951845at2759"/>
<dbReference type="Proteomes" id="UP000001811">
    <property type="component" value="Unplaced"/>
</dbReference>
<dbReference type="GO" id="GO:0005737">
    <property type="term" value="C:cytoplasm"/>
    <property type="evidence" value="ECO:0007669"/>
    <property type="project" value="UniProtKB-SubCell"/>
</dbReference>
<dbReference type="GO" id="GO:0004364">
    <property type="term" value="F:glutathione transferase activity"/>
    <property type="evidence" value="ECO:0007669"/>
    <property type="project" value="UniProtKB-EC"/>
</dbReference>
<dbReference type="GO" id="GO:0042802">
    <property type="term" value="F:identical protein binding"/>
    <property type="evidence" value="ECO:0007669"/>
    <property type="project" value="UniProtKB-ARBA"/>
</dbReference>
<dbReference type="GO" id="GO:0006749">
    <property type="term" value="P:glutathione metabolic process"/>
    <property type="evidence" value="ECO:0007669"/>
    <property type="project" value="TreeGrafter"/>
</dbReference>
<dbReference type="CDD" id="cd03209">
    <property type="entry name" value="GST_C_Mu"/>
    <property type="match status" value="1"/>
</dbReference>
<dbReference type="CDD" id="cd03075">
    <property type="entry name" value="GST_N_Mu"/>
    <property type="match status" value="1"/>
</dbReference>
<dbReference type="FunFam" id="1.20.1050.10:FF:000083">
    <property type="entry name" value="Glutathione S-transferase Mu 1"/>
    <property type="match status" value="1"/>
</dbReference>
<dbReference type="FunFam" id="3.40.30.10:FF:000603">
    <property type="entry name" value="Glutathione S-transferase Mu 1"/>
    <property type="match status" value="1"/>
</dbReference>
<dbReference type="Gene3D" id="1.20.1050.10">
    <property type="match status" value="1"/>
</dbReference>
<dbReference type="Gene3D" id="3.40.30.10">
    <property type="entry name" value="Glutaredoxin"/>
    <property type="match status" value="1"/>
</dbReference>
<dbReference type="InterPro" id="IPR010987">
    <property type="entry name" value="Glutathione-S-Trfase_C-like"/>
</dbReference>
<dbReference type="InterPro" id="IPR036282">
    <property type="entry name" value="Glutathione-S-Trfase_C_sf"/>
</dbReference>
<dbReference type="InterPro" id="IPR040079">
    <property type="entry name" value="Glutathione_S-Trfase"/>
</dbReference>
<dbReference type="InterPro" id="IPR004045">
    <property type="entry name" value="Glutathione_S-Trfase_N"/>
</dbReference>
<dbReference type="InterPro" id="IPR004046">
    <property type="entry name" value="GST_C"/>
</dbReference>
<dbReference type="InterPro" id="IPR003081">
    <property type="entry name" value="GST_mu"/>
</dbReference>
<dbReference type="InterPro" id="IPR050213">
    <property type="entry name" value="GST_superfamily"/>
</dbReference>
<dbReference type="InterPro" id="IPR036249">
    <property type="entry name" value="Thioredoxin-like_sf"/>
</dbReference>
<dbReference type="PANTHER" id="PTHR11571">
    <property type="entry name" value="GLUTATHIONE S-TRANSFERASE"/>
    <property type="match status" value="1"/>
</dbReference>
<dbReference type="PANTHER" id="PTHR11571:SF247">
    <property type="entry name" value="GLUTATHIONE S-TRANSFERASE MU 1"/>
    <property type="match status" value="1"/>
</dbReference>
<dbReference type="Pfam" id="PF00043">
    <property type="entry name" value="GST_C"/>
    <property type="match status" value="1"/>
</dbReference>
<dbReference type="Pfam" id="PF02798">
    <property type="entry name" value="GST_N"/>
    <property type="match status" value="1"/>
</dbReference>
<dbReference type="PRINTS" id="PR01267">
    <property type="entry name" value="GSTRNSFRASEM"/>
</dbReference>
<dbReference type="SFLD" id="SFLDG01205">
    <property type="entry name" value="AMPS.1"/>
    <property type="match status" value="1"/>
</dbReference>
<dbReference type="SFLD" id="SFLDS00019">
    <property type="entry name" value="Glutathione_Transferase_(cytos"/>
    <property type="match status" value="1"/>
</dbReference>
<dbReference type="SUPFAM" id="SSF47616">
    <property type="entry name" value="GST C-terminal domain-like"/>
    <property type="match status" value="1"/>
</dbReference>
<dbReference type="SUPFAM" id="SSF52833">
    <property type="entry name" value="Thioredoxin-like"/>
    <property type="match status" value="1"/>
</dbReference>
<dbReference type="PROSITE" id="PS50405">
    <property type="entry name" value="GST_CTER"/>
    <property type="match status" value="1"/>
</dbReference>
<dbReference type="PROSITE" id="PS50404">
    <property type="entry name" value="GST_NTER"/>
    <property type="match status" value="1"/>
</dbReference>
<keyword id="KW-0963">Cytoplasm</keyword>
<keyword id="KW-0903">Direct protein sequencing</keyword>
<keyword id="KW-1185">Reference proteome</keyword>
<keyword id="KW-0808">Transferase</keyword>
<reference key="1">
    <citation type="journal article" date="1995" name="Arch. Biochem. Biophys.">
        <title>Cloning and expression of a cDNA for mu-class glutathione S-transferase from rabbit liver.</title>
        <authorList>
            <person name="Lee S.H."/>
            <person name="Lee S.H."/>
            <person name="Han J.S."/>
            <person name="Kim Y.S."/>
            <person name="Koh J.K."/>
        </authorList>
    </citation>
    <scope>NUCLEOTIDE SEQUENCE [MRNA]</scope>
    <source>
        <tissue>Liver</tissue>
    </source>
</reference>
<reference key="2">
    <citation type="journal article" date="1993" name="Arch. Biochem. Biophys.">
        <title>Purification and characterization of class mu glutathione S-transferase isozymes from rabbit hepatic tissue.</title>
        <authorList>
            <person name="Primiano T."/>
            <person name="Novak R.F."/>
        </authorList>
    </citation>
    <scope>PROTEIN SEQUENCE OF 2-21</scope>
    <source>
        <tissue>Liver</tissue>
    </source>
</reference>
<sequence>MPMTLGYWDVRGLALPIRMLLEYTDTSYEEKKYTMGDAPNYDQSKWLSEKFTLGLDFPNLPYLIDGTHKLTQSNAILRYLARKHGLCGETEEERIRVDILENQLMDNRFQLVNVCYSPDFEKLKPEYLKGLPEKLQLYSQFLGSLPWFAGDKITFADFLVYDVLDQNRIFVPGCLDAFPNLKDFHVRFEGLPKISAYMKSSRFIRVPVFLKKATWTGI</sequence>
<name>GSTMU_RABIT</name>
<accession>P46409</accession>
<organism>
    <name type="scientific">Oryctolagus cuniculus</name>
    <name type="common">Rabbit</name>
    <dbReference type="NCBI Taxonomy" id="9986"/>
    <lineage>
        <taxon>Eukaryota</taxon>
        <taxon>Metazoa</taxon>
        <taxon>Chordata</taxon>
        <taxon>Craniata</taxon>
        <taxon>Vertebrata</taxon>
        <taxon>Euteleostomi</taxon>
        <taxon>Mammalia</taxon>
        <taxon>Eutheria</taxon>
        <taxon>Euarchontoglires</taxon>
        <taxon>Glires</taxon>
        <taxon>Lagomorpha</taxon>
        <taxon>Leporidae</taxon>
        <taxon>Oryctolagus</taxon>
    </lineage>
</organism>